<proteinExistence type="predicted"/>
<organism>
    <name type="scientific">Escherichia coli</name>
    <dbReference type="NCBI Taxonomy" id="562"/>
    <lineage>
        <taxon>Bacteria</taxon>
        <taxon>Pseudomonadati</taxon>
        <taxon>Pseudomonadota</taxon>
        <taxon>Gammaproteobacteria</taxon>
        <taxon>Enterobacterales</taxon>
        <taxon>Enterobacteriaceae</taxon>
        <taxon>Escherichia</taxon>
    </lineage>
</organism>
<geneLocation type="plasmid">
    <name>pMB1</name>
</geneLocation>
<keyword id="KW-0614">Plasmid</keyword>
<evidence type="ECO:0000256" key="1">
    <source>
        <dbReference type="SAM" id="MobiDB-lite"/>
    </source>
</evidence>
<dbReference type="EMBL" id="J01749">
    <property type="status" value="NOT_ANNOTATED_CDS"/>
    <property type="molecule type" value="Genomic_DNA"/>
</dbReference>
<dbReference type="PIR" id="A04482">
    <property type="entry name" value="QQECC8"/>
</dbReference>
<name>YPB4_ECOLX</name>
<protein>
    <recommendedName>
        <fullName>Uncharacterized 9.2 kDa protein</fullName>
    </recommendedName>
</protein>
<feature type="chain" id="PRO_0000068518" description="Uncharacterized 9.2 kDa protein">
    <location>
        <begin position="1"/>
        <end position="88"/>
    </location>
</feature>
<feature type="region of interest" description="Disordered" evidence="1">
    <location>
        <begin position="1"/>
        <end position="31"/>
    </location>
</feature>
<reference key="1">
    <citation type="journal article" date="1979" name="Cold Spring Harb. Symp. Quant. Biol.">
        <title>Complete nucleotide sequence of the Escherichia coli plasmid pBR322.</title>
        <authorList>
            <person name="Sutcliffe J.G."/>
        </authorList>
    </citation>
    <scope>NUCLEOTIDE SEQUENCE [GENOMIC DNA]</scope>
</reference>
<reference key="2">
    <citation type="journal article" date="1983" name="Proc. Natl. Acad. Sci. U.S.A.">
        <title>Directed mutagenesis method for analysis of mutagen specificity: application to ultraviolet-induced mutagenesis.</title>
        <authorList>
            <person name="Livneh Z."/>
        </authorList>
    </citation>
    <scope>SEQUENCE REVISION</scope>
</reference>
<accession>P03853</accession>
<sequence>MIPRDPRSPAPDLSAINQPAGRAERRSGPATLSASIQSINCCREARVSSSPVNSLRNVVAIAAGIVVSRSSFGMASFSSGSQRSRRVT</sequence>